<gene>
    <name type="ORF">MAL7P1.13</name>
    <name type="ORF">PF3D7_0703600</name>
</gene>
<evidence type="ECO:0000255" key="1"/>
<evidence type="ECO:0000269" key="2">
    <source>
    </source>
</evidence>
<evidence type="ECO:0000305" key="3"/>
<evidence type="ECO:0000312" key="4">
    <source>
        <dbReference type="EMBL" id="CAX64022.1"/>
    </source>
</evidence>
<proteinExistence type="evidence at protein level"/>
<comment type="biotechnology">
    <text evidence="2">Possible candidate for an effective malaria vaccine as determined by epitope response in sera.</text>
</comment>
<organism>
    <name type="scientific">Plasmodium falciparum (isolate 3D7)</name>
    <dbReference type="NCBI Taxonomy" id="36329"/>
    <lineage>
        <taxon>Eukaryota</taxon>
        <taxon>Sar</taxon>
        <taxon>Alveolata</taxon>
        <taxon>Apicomplexa</taxon>
        <taxon>Aconoidasida</taxon>
        <taxon>Haemosporida</taxon>
        <taxon>Plasmodiidae</taxon>
        <taxon>Plasmodium</taxon>
        <taxon>Plasmodium (Laverania)</taxon>
    </lineage>
</organism>
<dbReference type="EMBL" id="AL844506">
    <property type="protein sequence ID" value="CAX64022.1"/>
    <property type="molecule type" value="Genomic_DNA"/>
</dbReference>
<dbReference type="RefSeq" id="XP_002808749.1">
    <property type="nucleotide sequence ID" value="XM_002808703.1"/>
</dbReference>
<dbReference type="SMR" id="C0H4K2"/>
<dbReference type="BioGRID" id="1210009">
    <property type="interactions" value="4"/>
</dbReference>
<dbReference type="FunCoup" id="C0H4K2">
    <property type="interactions" value="293"/>
</dbReference>
<dbReference type="PaxDb" id="5833-MAL7P1.13"/>
<dbReference type="EnsemblProtists" id="CAX64022">
    <property type="protein sequence ID" value="CAX64022"/>
    <property type="gene ID" value="PF3D7_0703600"/>
</dbReference>
<dbReference type="GeneID" id="2655153"/>
<dbReference type="KEGG" id="pfa:PF3D7_0703600"/>
<dbReference type="InParanoid" id="C0H4K2"/>
<dbReference type="OMA" id="HAGLEME"/>
<dbReference type="OrthoDB" id="298686at2759"/>
<dbReference type="PhylomeDB" id="C0H4K2"/>
<dbReference type="Proteomes" id="UP000001450">
    <property type="component" value="Chromosome 7"/>
</dbReference>
<dbReference type="InterPro" id="IPR038835">
    <property type="entry name" value="Giardin_beta-like"/>
</dbReference>
<dbReference type="PANTHER" id="PTHR37027:SF2">
    <property type="entry name" value="CHROMOSOME UNDETERMINED SCAFFOLD_148, WHOLE GENOME SHOTGUN SEQUENCE"/>
    <property type="match status" value="1"/>
</dbReference>
<dbReference type="PANTHER" id="PTHR37027">
    <property type="entry name" value="KDE4"/>
    <property type="match status" value="1"/>
</dbReference>
<reference key="1">
    <citation type="journal article" date="2002" name="Nature">
        <title>Genome sequence of the human malaria parasite Plasmodium falciparum.</title>
        <authorList>
            <person name="Gardner M.J."/>
            <person name="Hall N."/>
            <person name="Fung E."/>
            <person name="White O."/>
            <person name="Berriman M."/>
            <person name="Hyman R.W."/>
            <person name="Carlton J.M."/>
            <person name="Pain A."/>
            <person name="Nelson K.E."/>
            <person name="Bowman S."/>
            <person name="Paulsen I.T."/>
            <person name="James K.D."/>
            <person name="Eisen J.A."/>
            <person name="Rutherford K.M."/>
            <person name="Salzberg S.L."/>
            <person name="Craig A."/>
            <person name="Kyes S."/>
            <person name="Chan M.-S."/>
            <person name="Nene V."/>
            <person name="Shallom S.J."/>
            <person name="Suh B."/>
            <person name="Peterson J."/>
            <person name="Angiuoli S."/>
            <person name="Pertea M."/>
            <person name="Allen J."/>
            <person name="Selengut J."/>
            <person name="Haft D."/>
            <person name="Mather M.W."/>
            <person name="Vaidya A.B."/>
            <person name="Martin D.M.A."/>
            <person name="Fairlamb A.H."/>
            <person name="Fraunholz M.J."/>
            <person name="Roos D.S."/>
            <person name="Ralph S.A."/>
            <person name="McFadden G.I."/>
            <person name="Cummings L.M."/>
            <person name="Subramanian G.M."/>
            <person name="Mungall C."/>
            <person name="Venter J.C."/>
            <person name="Carucci D.J."/>
            <person name="Hoffman S.L."/>
            <person name="Newbold C."/>
            <person name="Davis R.W."/>
            <person name="Fraser C.M."/>
            <person name="Barrell B.G."/>
        </authorList>
    </citation>
    <scope>NUCLEOTIDE SEQUENCE [LARGE SCALE GENOMIC DNA]</scope>
    <source>
        <strain>3D7</strain>
    </source>
</reference>
<reference evidence="4" key="2">
    <citation type="journal article" date="2002" name="Nature">
        <title>Sequence of Plasmodium falciparum chromosomes 1, 3-9 and 13.</title>
        <authorList>
            <person name="Hall N."/>
            <person name="Pain A."/>
            <person name="Berriman M."/>
            <person name="Churcher C.M."/>
            <person name="Harris B."/>
            <person name="Harris D."/>
            <person name="Mungall K.L."/>
            <person name="Bowman S."/>
            <person name="Atkin R."/>
            <person name="Baker S."/>
            <person name="Barron A."/>
            <person name="Brooks K."/>
            <person name="Buckee C.O."/>
            <person name="Burrows C."/>
            <person name="Cherevach I."/>
            <person name="Chillingworth C."/>
            <person name="Chillingworth T."/>
            <person name="Christodoulou Z."/>
            <person name="Clark L."/>
            <person name="Clark R."/>
            <person name="Corton C."/>
            <person name="Cronin A."/>
            <person name="Davies R.M."/>
            <person name="Davis P."/>
            <person name="Dear P."/>
            <person name="Dearden F."/>
            <person name="Doggett J."/>
            <person name="Feltwell T."/>
            <person name="Goble A."/>
            <person name="Goodhead I."/>
            <person name="Gwilliam R."/>
            <person name="Hamlin N."/>
            <person name="Hance Z."/>
            <person name="Harper D."/>
            <person name="Hauser H."/>
            <person name="Hornsby T."/>
            <person name="Holroyd S."/>
            <person name="Horrocks P."/>
            <person name="Humphray S."/>
            <person name="Jagels K."/>
            <person name="James K.D."/>
            <person name="Johnson D."/>
            <person name="Kerhornou A."/>
            <person name="Knights A."/>
            <person name="Konfortov B."/>
            <person name="Kyes S."/>
            <person name="Larke N."/>
            <person name="Lawson D."/>
            <person name="Lennard N."/>
            <person name="Line A."/>
            <person name="Maddison M."/>
            <person name="Mclean J."/>
            <person name="Mooney P."/>
            <person name="Moule S."/>
            <person name="Murphy L."/>
            <person name="Oliver K."/>
            <person name="Ormond D."/>
            <person name="Price C."/>
            <person name="Quail M.A."/>
            <person name="Rabbinowitsch E."/>
            <person name="Rajandream M.A."/>
            <person name="Rutter S."/>
            <person name="Rutherford K.M."/>
            <person name="Sanders M."/>
            <person name="Simmonds M."/>
            <person name="Seeger K."/>
            <person name="Sharp S."/>
            <person name="Smith R."/>
            <person name="Squares R."/>
            <person name="Squares S."/>
            <person name="Stevens K."/>
            <person name="Taylor K."/>
            <person name="Tivey A."/>
            <person name="Unwin L."/>
            <person name="Whitehead S."/>
            <person name="Woodward J.R."/>
            <person name="Sulston J.E."/>
            <person name="Craig A."/>
            <person name="Newbold C."/>
            <person name="Barrell B.G."/>
        </authorList>
    </citation>
    <scope>NUCLEOTIDE SEQUENCE [LARGE SCALE GENOMIC DNA]</scope>
    <source>
        <strain>3D7</strain>
    </source>
</reference>
<reference evidence="3" key="3">
    <citation type="journal article" date="2007" name="PLoS ONE">
        <title>Rapid identification of malaria vaccine candidates based on alpha-helical coiled coil protein motif.</title>
        <authorList>
            <person name="Villard V."/>
            <person name="Agak G.W."/>
            <person name="Frank G."/>
            <person name="Jafarshad A."/>
            <person name="Servis C."/>
            <person name="Nebie I."/>
            <person name="Sirima S.B."/>
            <person name="Felger I."/>
            <person name="Arevalo-Herrera M."/>
            <person name="Herrera S."/>
            <person name="Heitz F."/>
            <person name="Baecker V."/>
            <person name="Druilhe P."/>
            <person name="Kajava A.V."/>
            <person name="Corradin G."/>
        </authorList>
    </citation>
    <scope>SYNTHESIS OF 69-99</scope>
    <scope>POSSIBLE CANDIDATE MALARIA EPITOPE</scope>
</reference>
<accession>C0H4K2</accession>
<protein>
    <recommendedName>
        <fullName>Uncharacterized protein</fullName>
    </recommendedName>
</protein>
<name>PF08_PLAF7</name>
<feature type="chain" id="PRO_0000374062" description="Uncharacterized protein">
    <location>
        <begin position="1"/>
        <end position="262"/>
    </location>
</feature>
<feature type="coiled-coil region" evidence="1">
    <location>
        <begin position="41"/>
        <end position="118"/>
    </location>
</feature>
<sequence>MEELNKSGIYSKQFSLSQNKHNSERLQRLEKRLSGLHFSIELQKNEKIDKLNEKINSLEEKLIEMHENSNKTFEKLNEKLNDIRNDVTNYKNELEEFKNDHKKKLQLLEEKAEDFINKEKEDWSRLKIKLVKDFQHKAALLKEEMVEEYGLIEEKEDSLRKYYDCEINNIKSIIQNEISERIKTEKIILSDVDDKINEIMKIIRNEKTTRETYSENLVSLIEQYFSRIKKEIDMERLEREDTEETLVHLMEEALDKIGIPLA</sequence>
<keyword id="KW-0175">Coiled coil</keyword>
<keyword id="KW-0477">Merozoite</keyword>
<keyword id="KW-1185">Reference proteome</keyword>